<feature type="chain" id="PRO_0000358180" description="NADH-quinone oxidoreductase subunit C 2">
    <location>
        <begin position="1"/>
        <end position="187"/>
    </location>
</feature>
<feature type="region of interest" description="Disordered" evidence="2">
    <location>
        <begin position="153"/>
        <end position="187"/>
    </location>
</feature>
<accession>B3PY58</accession>
<keyword id="KW-0997">Cell inner membrane</keyword>
<keyword id="KW-1003">Cell membrane</keyword>
<keyword id="KW-0472">Membrane</keyword>
<keyword id="KW-0520">NAD</keyword>
<keyword id="KW-0874">Quinone</keyword>
<keyword id="KW-1278">Translocase</keyword>
<keyword id="KW-0813">Transport</keyword>
<keyword id="KW-0830">Ubiquinone</keyword>
<protein>
    <recommendedName>
        <fullName evidence="1">NADH-quinone oxidoreductase subunit C 2</fullName>
        <ecNumber evidence="1">7.1.1.-</ecNumber>
    </recommendedName>
    <alternativeName>
        <fullName evidence="1">NADH dehydrogenase I subunit C 2</fullName>
    </alternativeName>
    <alternativeName>
        <fullName evidence="1">NDH-1 subunit C 2</fullName>
    </alternativeName>
</protein>
<reference key="1">
    <citation type="journal article" date="2010" name="Appl. Environ. Microbiol.">
        <title>Conserved symbiotic plasmid DNA sequences in the multireplicon pangenomic structure of Rhizobium etli.</title>
        <authorList>
            <person name="Gonzalez V."/>
            <person name="Acosta J.L."/>
            <person name="Santamaria R.I."/>
            <person name="Bustos P."/>
            <person name="Fernandez J.L."/>
            <person name="Hernandez Gonzalez I.L."/>
            <person name="Diaz R."/>
            <person name="Flores M."/>
            <person name="Palacios R."/>
            <person name="Mora J."/>
            <person name="Davila G."/>
        </authorList>
    </citation>
    <scope>NUCLEOTIDE SEQUENCE [LARGE SCALE GENOMIC DNA]</scope>
    <source>
        <strain>CIAT 652</strain>
    </source>
</reference>
<comment type="function">
    <text evidence="1">NDH-1 shuttles electrons from NADH, via FMN and iron-sulfur (Fe-S) centers, to quinones in the respiratory chain. The immediate electron acceptor for the enzyme in this species is believed to be ubiquinone. Couples the redox reaction to proton translocation (for every two electrons transferred, four hydrogen ions are translocated across the cytoplasmic membrane), and thus conserves the redox energy in a proton gradient.</text>
</comment>
<comment type="catalytic activity">
    <reaction evidence="1">
        <text>a quinone + NADH + 5 H(+)(in) = a quinol + NAD(+) + 4 H(+)(out)</text>
        <dbReference type="Rhea" id="RHEA:57888"/>
        <dbReference type="ChEBI" id="CHEBI:15378"/>
        <dbReference type="ChEBI" id="CHEBI:24646"/>
        <dbReference type="ChEBI" id="CHEBI:57540"/>
        <dbReference type="ChEBI" id="CHEBI:57945"/>
        <dbReference type="ChEBI" id="CHEBI:132124"/>
    </reaction>
</comment>
<comment type="subunit">
    <text evidence="1">NDH-1 is composed of 14 different subunits. Subunits NuoB, C, D, E, F, and G constitute the peripheral sector of the complex.</text>
</comment>
<comment type="subcellular location">
    <subcellularLocation>
        <location evidence="1">Cell inner membrane</location>
        <topology evidence="1">Peripheral membrane protein</topology>
        <orientation evidence="1">Cytoplasmic side</orientation>
    </subcellularLocation>
</comment>
<comment type="similarity">
    <text evidence="1">Belongs to the complex I 30 kDa subunit family.</text>
</comment>
<organism>
    <name type="scientific">Rhizobium etli (strain CIAT 652)</name>
    <dbReference type="NCBI Taxonomy" id="491916"/>
    <lineage>
        <taxon>Bacteria</taxon>
        <taxon>Pseudomonadati</taxon>
        <taxon>Pseudomonadota</taxon>
        <taxon>Alphaproteobacteria</taxon>
        <taxon>Hyphomicrobiales</taxon>
        <taxon>Rhizobiaceae</taxon>
        <taxon>Rhizobium/Agrobacterium group</taxon>
        <taxon>Rhizobium</taxon>
    </lineage>
</organism>
<dbReference type="EC" id="7.1.1.-" evidence="1"/>
<dbReference type="EMBL" id="CP001074">
    <property type="protein sequence ID" value="ACE92579.1"/>
    <property type="molecule type" value="Genomic_DNA"/>
</dbReference>
<dbReference type="SMR" id="B3PY58"/>
<dbReference type="KEGG" id="rec:RHECIAT_CH0003634"/>
<dbReference type="eggNOG" id="COG0852">
    <property type="taxonomic scope" value="Bacteria"/>
</dbReference>
<dbReference type="HOGENOM" id="CLU_042628_6_2_5"/>
<dbReference type="Proteomes" id="UP000008817">
    <property type="component" value="Chromosome"/>
</dbReference>
<dbReference type="GO" id="GO:0005886">
    <property type="term" value="C:plasma membrane"/>
    <property type="evidence" value="ECO:0007669"/>
    <property type="project" value="UniProtKB-SubCell"/>
</dbReference>
<dbReference type="GO" id="GO:0008137">
    <property type="term" value="F:NADH dehydrogenase (ubiquinone) activity"/>
    <property type="evidence" value="ECO:0007669"/>
    <property type="project" value="InterPro"/>
</dbReference>
<dbReference type="GO" id="GO:0050136">
    <property type="term" value="F:NADH:ubiquinone reductase (non-electrogenic) activity"/>
    <property type="evidence" value="ECO:0007669"/>
    <property type="project" value="UniProtKB-UniRule"/>
</dbReference>
<dbReference type="GO" id="GO:0048038">
    <property type="term" value="F:quinone binding"/>
    <property type="evidence" value="ECO:0007669"/>
    <property type="project" value="UniProtKB-KW"/>
</dbReference>
<dbReference type="Gene3D" id="3.30.460.80">
    <property type="entry name" value="NADH:ubiquinone oxidoreductase, 30kDa subunit"/>
    <property type="match status" value="1"/>
</dbReference>
<dbReference type="HAMAP" id="MF_01357">
    <property type="entry name" value="NDH1_NuoC"/>
    <property type="match status" value="1"/>
</dbReference>
<dbReference type="InterPro" id="IPR010218">
    <property type="entry name" value="NADH_DH_suC"/>
</dbReference>
<dbReference type="InterPro" id="IPR037232">
    <property type="entry name" value="NADH_quin_OxRdtase_su_C/D-like"/>
</dbReference>
<dbReference type="InterPro" id="IPR001268">
    <property type="entry name" value="NADH_UbQ_OxRdtase_30kDa_su"/>
</dbReference>
<dbReference type="InterPro" id="IPR020396">
    <property type="entry name" value="NADH_UbQ_OxRdtase_CS"/>
</dbReference>
<dbReference type="NCBIfam" id="TIGR01961">
    <property type="entry name" value="NuoC_fam"/>
    <property type="match status" value="1"/>
</dbReference>
<dbReference type="PANTHER" id="PTHR10884:SF14">
    <property type="entry name" value="NADH DEHYDROGENASE [UBIQUINONE] IRON-SULFUR PROTEIN 3, MITOCHONDRIAL"/>
    <property type="match status" value="1"/>
</dbReference>
<dbReference type="PANTHER" id="PTHR10884">
    <property type="entry name" value="NADH DEHYDROGENASE UBIQUINONE IRON-SULFUR PROTEIN 3"/>
    <property type="match status" value="1"/>
</dbReference>
<dbReference type="Pfam" id="PF00329">
    <property type="entry name" value="Complex1_30kDa"/>
    <property type="match status" value="1"/>
</dbReference>
<dbReference type="SUPFAM" id="SSF143243">
    <property type="entry name" value="Nqo5-like"/>
    <property type="match status" value="1"/>
</dbReference>
<dbReference type="PROSITE" id="PS00542">
    <property type="entry name" value="COMPLEX1_30K"/>
    <property type="match status" value="1"/>
</dbReference>
<gene>
    <name evidence="1" type="primary">nuoC2</name>
    <name type="ordered locus">RHECIAT_CH0003634</name>
</gene>
<sequence length="187" mass="21655">MSVEPSLNRAPIMERFGDTIEDLGTAHGIDVFAVPPERIVEFCRFLKEHPAMQFNFLSDICGVDHYPETPRFEAVYHLYSLPNRWRVRIKCRLGDPPEVPSVTGVWRTANWHEREAWDMYGIRFAGHPDLRRIYMWEGFEGFPQRKDFPLRGYKDKLNPFGAEGPPPTQPDLATRDIPQGRPSTPES</sequence>
<name>NUOC2_RHIE6</name>
<evidence type="ECO:0000255" key="1">
    <source>
        <dbReference type="HAMAP-Rule" id="MF_01357"/>
    </source>
</evidence>
<evidence type="ECO:0000256" key="2">
    <source>
        <dbReference type="SAM" id="MobiDB-lite"/>
    </source>
</evidence>
<proteinExistence type="inferred from homology"/>